<keyword id="KW-0029">Amino-acid transport</keyword>
<keyword id="KW-0903">Direct protein sequencing</keyword>
<keyword id="KW-1015">Disulfide bond</keyword>
<keyword id="KW-0574">Periplasm</keyword>
<keyword id="KW-1185">Reference proteome</keyword>
<keyword id="KW-0732">Signal</keyword>
<keyword id="KW-0813">Transport</keyword>
<evidence type="ECO:0000250" key="1">
    <source>
        <dbReference type="UniProtKB" id="P02911"/>
    </source>
</evidence>
<evidence type="ECO:0000269" key="2">
    <source>
    </source>
</evidence>
<evidence type="ECO:0000305" key="3"/>
<name>ARGT_ECOLI</name>
<sequence length="260" mass="27992">MKKSILALSLLVGLSTAASSYAALPETVRIGTDTTYAPFSSKDAKGDFVGFDIDLGNEMCKRMQVKCTWVASDFDALIPSLKAKKIDAIISSLSITDKRQQEIAFSDKLYAADSRLIAAKGSPIQPTLDSLKGKHVGVLQGSTQEAYANETWRSKGVDVVAYANQDLVYSDLAAGRLDAALQDEVAASEGFLKQPAGKDFAFAGSSVKDKKYFGDGTGVGLRKDDAELTAAFNKALGELRQDGTYDKMAKKYFDFNVYGD</sequence>
<dbReference type="EMBL" id="U00096">
    <property type="protein sequence ID" value="AAC75370.1"/>
    <property type="molecule type" value="Genomic_DNA"/>
</dbReference>
<dbReference type="EMBL" id="AP009048">
    <property type="protein sequence ID" value="BAA16156.1"/>
    <property type="molecule type" value="Genomic_DNA"/>
</dbReference>
<dbReference type="EMBL" id="AH000881">
    <property type="protein sequence ID" value="AAA23971.1"/>
    <property type="molecule type" value="Genomic_DNA"/>
</dbReference>
<dbReference type="EMBL" id="U47027">
    <property type="protein sequence ID" value="AAA85768.1"/>
    <property type="molecule type" value="Genomic_DNA"/>
</dbReference>
<dbReference type="PIR" id="D65003">
    <property type="entry name" value="JKECT"/>
</dbReference>
<dbReference type="RefSeq" id="NP_416813.1">
    <property type="nucleotide sequence ID" value="NC_000913.3"/>
</dbReference>
<dbReference type="RefSeq" id="WP_000748271.1">
    <property type="nucleotide sequence ID" value="NZ_LN832404.1"/>
</dbReference>
<dbReference type="SMR" id="P09551"/>
<dbReference type="BioGRID" id="4260525">
    <property type="interactions" value="19"/>
</dbReference>
<dbReference type="ComplexPortal" id="CPX-4329">
    <property type="entry name" value="Polar amino acid ABC transporter complex"/>
</dbReference>
<dbReference type="DIP" id="DIP-9148N"/>
<dbReference type="FunCoup" id="P09551">
    <property type="interactions" value="243"/>
</dbReference>
<dbReference type="IntAct" id="P09551">
    <property type="interactions" value="2"/>
</dbReference>
<dbReference type="STRING" id="511145.b2310"/>
<dbReference type="TCDB" id="3.A.1.3.1">
    <property type="family name" value="the atp-binding cassette (abc) superfamily"/>
</dbReference>
<dbReference type="TCDB" id="3.A.1.3.29">
    <property type="family name" value="the atp-binding cassette (abc) superfamily"/>
</dbReference>
<dbReference type="jPOST" id="P09551"/>
<dbReference type="PaxDb" id="511145-b2310"/>
<dbReference type="EnsemblBacteria" id="AAC75370">
    <property type="protein sequence ID" value="AAC75370"/>
    <property type="gene ID" value="b2310"/>
</dbReference>
<dbReference type="GeneID" id="949030"/>
<dbReference type="KEGG" id="ecj:JW2307"/>
<dbReference type="KEGG" id="eco:b2310"/>
<dbReference type="KEGG" id="ecoc:C3026_12880"/>
<dbReference type="PATRIC" id="fig|1411691.4.peg.4424"/>
<dbReference type="EchoBASE" id="EB0070"/>
<dbReference type="eggNOG" id="COG0834">
    <property type="taxonomic scope" value="Bacteria"/>
</dbReference>
<dbReference type="HOGENOM" id="CLU_019602_18_0_6"/>
<dbReference type="InParanoid" id="P09551"/>
<dbReference type="OMA" id="YPTSYHD"/>
<dbReference type="OrthoDB" id="9768183at2"/>
<dbReference type="PhylomeDB" id="P09551"/>
<dbReference type="BioCyc" id="EcoCyc:ARGT-MONOMER"/>
<dbReference type="PRO" id="PR:P09551"/>
<dbReference type="Proteomes" id="UP000000625">
    <property type="component" value="Chromosome"/>
</dbReference>
<dbReference type="GO" id="GO:0055052">
    <property type="term" value="C:ATP-binding cassette (ABC) transporter complex, substrate-binding subunit-containing"/>
    <property type="evidence" value="ECO:0000303"/>
    <property type="project" value="ComplexPortal"/>
</dbReference>
<dbReference type="GO" id="GO:0016020">
    <property type="term" value="C:membrane"/>
    <property type="evidence" value="ECO:0000303"/>
    <property type="project" value="ComplexPortal"/>
</dbReference>
<dbReference type="GO" id="GO:0030288">
    <property type="term" value="C:outer membrane-bounded periplasmic space"/>
    <property type="evidence" value="ECO:0000314"/>
    <property type="project" value="EcoCyc"/>
</dbReference>
<dbReference type="GO" id="GO:0016597">
    <property type="term" value="F:amino acid binding"/>
    <property type="evidence" value="ECO:0000318"/>
    <property type="project" value="GO_Central"/>
</dbReference>
<dbReference type="GO" id="GO:0089718">
    <property type="term" value="P:amino acid import across plasma membrane"/>
    <property type="evidence" value="ECO:0000303"/>
    <property type="project" value="ComplexPortal"/>
</dbReference>
<dbReference type="GO" id="GO:0006995">
    <property type="term" value="P:cellular response to nitrogen starvation"/>
    <property type="evidence" value="ECO:0000270"/>
    <property type="project" value="EcoCyc"/>
</dbReference>
<dbReference type="GO" id="GO:0009267">
    <property type="term" value="P:cellular response to starvation"/>
    <property type="evidence" value="ECO:0000270"/>
    <property type="project" value="EcoCyc"/>
</dbReference>
<dbReference type="GO" id="GO:0071294">
    <property type="term" value="P:cellular response to zinc ion"/>
    <property type="evidence" value="ECO:0000270"/>
    <property type="project" value="EcoCyc"/>
</dbReference>
<dbReference type="GO" id="GO:1902022">
    <property type="term" value="P:L-lysine transport"/>
    <property type="evidence" value="ECO:0000266"/>
    <property type="project" value="EcoCyc"/>
</dbReference>
<dbReference type="GO" id="GO:0015822">
    <property type="term" value="P:ornithine transport"/>
    <property type="evidence" value="ECO:0000266"/>
    <property type="project" value="EcoCyc"/>
</dbReference>
<dbReference type="CDD" id="cd13703">
    <property type="entry name" value="PBP2_HisJ_LAO"/>
    <property type="match status" value="1"/>
</dbReference>
<dbReference type="FunFam" id="3.40.190.10:FF:000020">
    <property type="entry name" value="Histidine ABC transporter substrate-binding periplasmic protein"/>
    <property type="match status" value="1"/>
</dbReference>
<dbReference type="Gene3D" id="3.40.190.10">
    <property type="entry name" value="Periplasmic binding protein-like II"/>
    <property type="match status" value="2"/>
</dbReference>
<dbReference type="InterPro" id="IPR005768">
    <property type="entry name" value="Lys_Arg_Orn-bd"/>
</dbReference>
<dbReference type="InterPro" id="IPR018313">
    <property type="entry name" value="SBP_3_CS"/>
</dbReference>
<dbReference type="InterPro" id="IPR001638">
    <property type="entry name" value="Solute-binding_3/MltF_N"/>
</dbReference>
<dbReference type="NCBIfam" id="TIGR01096">
    <property type="entry name" value="3A0103s03R"/>
    <property type="match status" value="1"/>
</dbReference>
<dbReference type="NCBIfam" id="NF011586">
    <property type="entry name" value="PRK15010.1"/>
    <property type="match status" value="1"/>
</dbReference>
<dbReference type="PANTHER" id="PTHR35936:SF23">
    <property type="entry name" value="LYSINE_ARGININE_ORNITHINE-BINDING PERIPLASMIC PROTEIN"/>
    <property type="match status" value="1"/>
</dbReference>
<dbReference type="PANTHER" id="PTHR35936">
    <property type="entry name" value="MEMBRANE-BOUND LYTIC MUREIN TRANSGLYCOSYLASE F"/>
    <property type="match status" value="1"/>
</dbReference>
<dbReference type="Pfam" id="PF00497">
    <property type="entry name" value="SBP_bac_3"/>
    <property type="match status" value="1"/>
</dbReference>
<dbReference type="SMART" id="SM00062">
    <property type="entry name" value="PBPb"/>
    <property type="match status" value="1"/>
</dbReference>
<dbReference type="SUPFAM" id="SSF53850">
    <property type="entry name" value="Periplasmic binding protein-like II"/>
    <property type="match status" value="1"/>
</dbReference>
<dbReference type="PROSITE" id="PS01039">
    <property type="entry name" value="SBP_BACTERIAL_3"/>
    <property type="match status" value="1"/>
</dbReference>
<comment type="function">
    <text evidence="1">Part of the ABC transporter complex HisPMQ-ArgT involved in lysine/arginine/ornithine transport. Binds lysine, arginine and ornithine. Stimulates ATPase activity of HisP.</text>
</comment>
<comment type="subunit">
    <text evidence="1">The complex is composed of two ATP-binding proteins (HisP), two transmembrane proteins (HisM and HisQ) and a solute-binding protein (ArgT).</text>
</comment>
<comment type="subcellular location">
    <subcellularLocation>
        <location evidence="1">Periplasm</location>
    </subcellularLocation>
</comment>
<comment type="similarity">
    <text evidence="3">Belongs to the bacterial solute-binding protein 3 family.</text>
</comment>
<reference key="1">
    <citation type="journal article" date="1997" name="DNA Res.">
        <title>Construction of a contiguous 874-kb sequence of the Escherichia coli-K12 genome corresponding to 50.0-68.8 min on the linkage map and analysis of its sequence features.</title>
        <authorList>
            <person name="Yamamoto Y."/>
            <person name="Aiba H."/>
            <person name="Baba T."/>
            <person name="Hayashi K."/>
            <person name="Inada T."/>
            <person name="Isono K."/>
            <person name="Itoh T."/>
            <person name="Kimura S."/>
            <person name="Kitagawa M."/>
            <person name="Makino K."/>
            <person name="Miki T."/>
            <person name="Mitsuhashi N."/>
            <person name="Mizobuchi K."/>
            <person name="Mori H."/>
            <person name="Nakade S."/>
            <person name="Nakamura Y."/>
            <person name="Nashimoto H."/>
            <person name="Oshima T."/>
            <person name="Oyama S."/>
            <person name="Saito N."/>
            <person name="Sampei G."/>
            <person name="Satoh Y."/>
            <person name="Sivasundaram S."/>
            <person name="Tagami H."/>
            <person name="Takahashi H."/>
            <person name="Takeda J."/>
            <person name="Takemoto K."/>
            <person name="Uehara K."/>
            <person name="Wada C."/>
            <person name="Yamagata S."/>
            <person name="Horiuchi T."/>
        </authorList>
    </citation>
    <scope>NUCLEOTIDE SEQUENCE [LARGE SCALE GENOMIC DNA]</scope>
    <source>
        <strain>K12 / W3110 / ATCC 27325 / DSM 5911</strain>
    </source>
</reference>
<reference key="2">
    <citation type="journal article" date="1997" name="Science">
        <title>The complete genome sequence of Escherichia coli K-12.</title>
        <authorList>
            <person name="Blattner F.R."/>
            <person name="Plunkett G. III"/>
            <person name="Bloch C.A."/>
            <person name="Perna N.T."/>
            <person name="Burland V."/>
            <person name="Riley M."/>
            <person name="Collado-Vides J."/>
            <person name="Glasner J.D."/>
            <person name="Rode C.K."/>
            <person name="Mayhew G.F."/>
            <person name="Gregor J."/>
            <person name="Davis N.W."/>
            <person name="Kirkpatrick H.A."/>
            <person name="Goeden M.A."/>
            <person name="Rose D.J."/>
            <person name="Mau B."/>
            <person name="Shao Y."/>
        </authorList>
    </citation>
    <scope>NUCLEOTIDE SEQUENCE [LARGE SCALE GENOMIC DNA]</scope>
    <source>
        <strain>K12 / MG1655 / ATCC 47076</strain>
    </source>
</reference>
<reference key="3">
    <citation type="journal article" date="2006" name="Mol. Syst. Biol.">
        <title>Highly accurate genome sequences of Escherichia coli K-12 strains MG1655 and W3110.</title>
        <authorList>
            <person name="Hayashi K."/>
            <person name="Morooka N."/>
            <person name="Yamamoto Y."/>
            <person name="Fujita K."/>
            <person name="Isono K."/>
            <person name="Choi S."/>
            <person name="Ohtsubo E."/>
            <person name="Baba T."/>
            <person name="Wanner B.L."/>
            <person name="Mori H."/>
            <person name="Horiuchi T."/>
        </authorList>
    </citation>
    <scope>NUCLEOTIDE SEQUENCE [LARGE SCALE GENOMIC DNA]</scope>
    <source>
        <strain>K12 / W3110 / ATCC 27325 / DSM 5911</strain>
    </source>
</reference>
<reference key="4">
    <citation type="journal article" date="1987" name="J. Biol. Chem.">
        <title>The hisT-purF region of the Escherichia coli K-12 chromosome. Identification of additional genes of the hisT and purF operons.</title>
        <authorList>
            <person name="Nonet M.L."/>
            <person name="Marvel C.C."/>
            <person name="Tolan D.R."/>
        </authorList>
    </citation>
    <scope>NUCLEOTIDE SEQUENCE [GENOMIC DNA] OF 1-146</scope>
    <source>
        <strain>K12</strain>
    </source>
</reference>
<reference key="5">
    <citation type="submission" date="1996-01" db="EMBL/GenBank/DDBJ databases">
        <authorList>
            <person name="Joshi A."/>
            <person name="Ames G.F.-L."/>
        </authorList>
    </citation>
    <scope>NUCLEOTIDE SEQUENCE [GENOMIC DNA] OF 146-260</scope>
    <source>
        <strain>K12</strain>
    </source>
</reference>
<reference key="6">
    <citation type="journal article" date="1997" name="Electrophoresis">
        <title>Comparing the predicted and observed properties of proteins encoded in the genome of Escherichia coli K-12.</title>
        <authorList>
            <person name="Link A.J."/>
            <person name="Robison K."/>
            <person name="Church G.M."/>
        </authorList>
    </citation>
    <scope>PROTEIN SEQUENCE OF 23-34</scope>
    <source>
        <strain>K12 / EMG2</strain>
    </source>
</reference>
<gene>
    <name type="primary">argT</name>
    <name type="ordered locus">b2310</name>
    <name type="ordered locus">JW2307</name>
</gene>
<feature type="signal peptide" evidence="2">
    <location>
        <begin position="1"/>
        <end position="22"/>
    </location>
</feature>
<feature type="chain" id="PRO_0000031749" description="Lysine/arginine/ornithine-binding periplasmic protein">
    <location>
        <begin position="23"/>
        <end position="260"/>
    </location>
</feature>
<feature type="binding site" evidence="1">
    <location>
        <position position="33"/>
    </location>
    <ligand>
        <name>L-arginine</name>
        <dbReference type="ChEBI" id="CHEBI:32682"/>
    </ligand>
</feature>
<feature type="binding site" evidence="1">
    <location>
        <position position="33"/>
    </location>
    <ligand>
        <name>L-lysine</name>
        <dbReference type="ChEBI" id="CHEBI:32551"/>
    </ligand>
</feature>
<feature type="binding site" evidence="1">
    <location>
        <position position="33"/>
    </location>
    <ligand>
        <name>L-ornithine</name>
        <dbReference type="ChEBI" id="CHEBI:46911"/>
    </ligand>
</feature>
<feature type="binding site" evidence="1">
    <location>
        <position position="91"/>
    </location>
    <ligand>
        <name>L-arginine</name>
        <dbReference type="ChEBI" id="CHEBI:32682"/>
    </ligand>
</feature>
<feature type="binding site" evidence="1">
    <location>
        <position position="91"/>
    </location>
    <ligand>
        <name>L-ornithine</name>
        <dbReference type="ChEBI" id="CHEBI:46911"/>
    </ligand>
</feature>
<feature type="binding site" evidence="1">
    <location>
        <position position="92"/>
    </location>
    <ligand>
        <name>L-arginine</name>
        <dbReference type="ChEBI" id="CHEBI:32682"/>
    </ligand>
</feature>
<feature type="binding site" evidence="1">
    <location>
        <position position="92"/>
    </location>
    <ligand>
        <name>L-lysine</name>
        <dbReference type="ChEBI" id="CHEBI:32551"/>
    </ligand>
</feature>
<feature type="binding site" evidence="1">
    <location>
        <position position="92"/>
    </location>
    <ligand>
        <name>L-ornithine</name>
        <dbReference type="ChEBI" id="CHEBI:46911"/>
    </ligand>
</feature>
<feature type="binding site" evidence="1">
    <location>
        <position position="94"/>
    </location>
    <ligand>
        <name>L-arginine</name>
        <dbReference type="ChEBI" id="CHEBI:32682"/>
    </ligand>
</feature>
<feature type="binding site" evidence="1">
    <location>
        <position position="94"/>
    </location>
    <ligand>
        <name>L-lysine</name>
        <dbReference type="ChEBI" id="CHEBI:32551"/>
    </ligand>
</feature>
<feature type="binding site" evidence="1">
    <location>
        <position position="94"/>
    </location>
    <ligand>
        <name>L-ornithine</name>
        <dbReference type="ChEBI" id="CHEBI:46911"/>
    </ligand>
</feature>
<feature type="binding site" evidence="1">
    <location>
        <position position="99"/>
    </location>
    <ligand>
        <name>L-arginine</name>
        <dbReference type="ChEBI" id="CHEBI:32682"/>
    </ligand>
</feature>
<feature type="binding site" evidence="1">
    <location>
        <position position="99"/>
    </location>
    <ligand>
        <name>L-lysine</name>
        <dbReference type="ChEBI" id="CHEBI:32551"/>
    </ligand>
</feature>
<feature type="binding site" evidence="1">
    <location>
        <position position="99"/>
    </location>
    <ligand>
        <name>L-ornithine</name>
        <dbReference type="ChEBI" id="CHEBI:46911"/>
    </ligand>
</feature>
<feature type="binding site" evidence="1">
    <location>
        <position position="143"/>
    </location>
    <ligand>
        <name>L-arginine</name>
        <dbReference type="ChEBI" id="CHEBI:32682"/>
    </ligand>
</feature>
<feature type="binding site" evidence="1">
    <location>
        <position position="143"/>
    </location>
    <ligand>
        <name>L-lysine</name>
        <dbReference type="ChEBI" id="CHEBI:32551"/>
    </ligand>
</feature>
<feature type="binding site" evidence="1">
    <location>
        <position position="143"/>
    </location>
    <ligand>
        <name>L-ornithine</name>
        <dbReference type="ChEBI" id="CHEBI:46911"/>
    </ligand>
</feature>
<feature type="binding site" evidence="1">
    <location>
        <position position="183"/>
    </location>
    <ligand>
        <name>L-arginine</name>
        <dbReference type="ChEBI" id="CHEBI:32682"/>
    </ligand>
</feature>
<feature type="binding site" evidence="1">
    <location>
        <position position="183"/>
    </location>
    <ligand>
        <name>L-ornithine</name>
        <dbReference type="ChEBI" id="CHEBI:46911"/>
    </ligand>
</feature>
<feature type="disulfide bond" evidence="1">
    <location>
        <begin position="60"/>
        <end position="67"/>
    </location>
</feature>
<feature type="sequence conflict" description="In Ref. 4; AAA23971." evidence="3" ref="4">
    <original>A</original>
    <variation>P</variation>
    <location>
        <position position="23"/>
    </location>
</feature>
<feature type="sequence conflict" description="In Ref. 4." evidence="3" ref="4">
    <original>ID</original>
    <variation>ST</variation>
    <location>
        <begin position="86"/>
        <end position="87"/>
    </location>
</feature>
<feature type="sequence conflict" description="In Ref. 4." evidence="3" ref="4">
    <original>I</original>
    <variation>V</variation>
    <location>
        <position position="95"/>
    </location>
</feature>
<feature type="sequence conflict" description="In Ref. 5; AAA85768." evidence="3" ref="5">
    <original>FA</original>
    <variation>SP</variation>
    <location>
        <begin position="200"/>
        <end position="201"/>
    </location>
</feature>
<feature type="sequence conflict" description="In Ref. 5; AAA85768." evidence="3" ref="5">
    <original>F</original>
    <variation>L</variation>
    <location>
        <position position="213"/>
    </location>
</feature>
<feature type="sequence conflict" description="In Ref. 5; AAA85768." evidence="3" ref="5">
    <original>GEL</original>
    <variation>ACV</variation>
    <location>
        <begin position="237"/>
        <end position="239"/>
    </location>
</feature>
<proteinExistence type="evidence at protein level"/>
<protein>
    <recommendedName>
        <fullName evidence="3">Lysine/arginine/ornithine-binding periplasmic protein</fullName>
        <shortName>LAO-binding protein</shortName>
    </recommendedName>
</protein>
<organism>
    <name type="scientific">Escherichia coli (strain K12)</name>
    <dbReference type="NCBI Taxonomy" id="83333"/>
    <lineage>
        <taxon>Bacteria</taxon>
        <taxon>Pseudomonadati</taxon>
        <taxon>Pseudomonadota</taxon>
        <taxon>Gammaproteobacteria</taxon>
        <taxon>Enterobacterales</taxon>
        <taxon>Enterobacteriaceae</taxon>
        <taxon>Escherichia</taxon>
    </lineage>
</organism>
<accession>P09551</accession>
<accession>P77476</accession>